<protein>
    <recommendedName>
        <fullName evidence="1">Thiamine-phosphate synthase</fullName>
        <shortName evidence="1">TP synthase</shortName>
        <shortName evidence="1">TPS</shortName>
        <ecNumber evidence="1">2.5.1.3</ecNumber>
    </recommendedName>
    <alternativeName>
        <fullName evidence="1">Thiamine-phosphate pyrophosphorylase</fullName>
        <shortName evidence="1">TMP pyrophosphorylase</shortName>
        <shortName evidence="1">TMP-PPase</shortName>
    </alternativeName>
</protein>
<evidence type="ECO:0000255" key="1">
    <source>
        <dbReference type="HAMAP-Rule" id="MF_00097"/>
    </source>
</evidence>
<reference key="1">
    <citation type="journal article" date="2006" name="Nat. Genet.">
        <title>The multidrug-resistant human pathogen Clostridium difficile has a highly mobile, mosaic genome.</title>
        <authorList>
            <person name="Sebaihia M."/>
            <person name="Wren B.W."/>
            <person name="Mullany P."/>
            <person name="Fairweather N.F."/>
            <person name="Minton N."/>
            <person name="Stabler R."/>
            <person name="Thomson N.R."/>
            <person name="Roberts A.P."/>
            <person name="Cerdeno-Tarraga A.M."/>
            <person name="Wang H."/>
            <person name="Holden M.T.G."/>
            <person name="Wright A."/>
            <person name="Churcher C."/>
            <person name="Quail M.A."/>
            <person name="Baker S."/>
            <person name="Bason N."/>
            <person name="Brooks K."/>
            <person name="Chillingworth T."/>
            <person name="Cronin A."/>
            <person name="Davis P."/>
            <person name="Dowd L."/>
            <person name="Fraser A."/>
            <person name="Feltwell T."/>
            <person name="Hance Z."/>
            <person name="Holroyd S."/>
            <person name="Jagels K."/>
            <person name="Moule S."/>
            <person name="Mungall K."/>
            <person name="Price C."/>
            <person name="Rabbinowitsch E."/>
            <person name="Sharp S."/>
            <person name="Simmonds M."/>
            <person name="Stevens K."/>
            <person name="Unwin L."/>
            <person name="Whithead S."/>
            <person name="Dupuy B."/>
            <person name="Dougan G."/>
            <person name="Barrell B."/>
            <person name="Parkhill J."/>
        </authorList>
    </citation>
    <scope>NUCLEOTIDE SEQUENCE [LARGE SCALE GENOMIC DNA]</scope>
    <source>
        <strain>630</strain>
    </source>
</reference>
<accession>Q186F8</accession>
<gene>
    <name evidence="1" type="primary">thiE</name>
    <name type="ordered locus">CD630_16010</name>
</gene>
<organism>
    <name type="scientific">Clostridioides difficile (strain 630)</name>
    <name type="common">Peptoclostridium difficile</name>
    <dbReference type="NCBI Taxonomy" id="272563"/>
    <lineage>
        <taxon>Bacteria</taxon>
        <taxon>Bacillati</taxon>
        <taxon>Bacillota</taxon>
        <taxon>Clostridia</taxon>
        <taxon>Peptostreptococcales</taxon>
        <taxon>Peptostreptococcaceae</taxon>
        <taxon>Clostridioides</taxon>
    </lineage>
</organism>
<dbReference type="EC" id="2.5.1.3" evidence="1"/>
<dbReference type="EMBL" id="AM180355">
    <property type="protein sequence ID" value="CAJ68466.1"/>
    <property type="molecule type" value="Genomic_DNA"/>
</dbReference>
<dbReference type="RefSeq" id="WP_003436488.1">
    <property type="nucleotide sequence ID" value="NZ_JAUPES010000013.1"/>
</dbReference>
<dbReference type="RefSeq" id="YP_001088102.1">
    <property type="nucleotide sequence ID" value="NC_009089.1"/>
</dbReference>
<dbReference type="SMR" id="Q186F8"/>
<dbReference type="STRING" id="272563.CD630_16010"/>
<dbReference type="EnsemblBacteria" id="CAJ68466">
    <property type="protein sequence ID" value="CAJ68466"/>
    <property type="gene ID" value="CD630_16010"/>
</dbReference>
<dbReference type="GeneID" id="66354011"/>
<dbReference type="KEGG" id="cdf:CD630_16010"/>
<dbReference type="KEGG" id="pdc:CDIF630_01776"/>
<dbReference type="PATRIC" id="fig|272563.120.peg.1677"/>
<dbReference type="eggNOG" id="COG0352">
    <property type="taxonomic scope" value="Bacteria"/>
</dbReference>
<dbReference type="OrthoDB" id="9812206at2"/>
<dbReference type="PhylomeDB" id="Q186F8"/>
<dbReference type="BioCyc" id="PDIF272563:G12WB-1740-MONOMER"/>
<dbReference type="UniPathway" id="UPA00060">
    <property type="reaction ID" value="UER00141"/>
</dbReference>
<dbReference type="Proteomes" id="UP000001978">
    <property type="component" value="Chromosome"/>
</dbReference>
<dbReference type="GO" id="GO:0005737">
    <property type="term" value="C:cytoplasm"/>
    <property type="evidence" value="ECO:0007669"/>
    <property type="project" value="TreeGrafter"/>
</dbReference>
<dbReference type="GO" id="GO:0000287">
    <property type="term" value="F:magnesium ion binding"/>
    <property type="evidence" value="ECO:0007669"/>
    <property type="project" value="UniProtKB-UniRule"/>
</dbReference>
<dbReference type="GO" id="GO:0004789">
    <property type="term" value="F:thiamine-phosphate diphosphorylase activity"/>
    <property type="evidence" value="ECO:0007669"/>
    <property type="project" value="UniProtKB-UniRule"/>
</dbReference>
<dbReference type="GO" id="GO:0009228">
    <property type="term" value="P:thiamine biosynthetic process"/>
    <property type="evidence" value="ECO:0007669"/>
    <property type="project" value="UniProtKB-KW"/>
</dbReference>
<dbReference type="GO" id="GO:0009229">
    <property type="term" value="P:thiamine diphosphate biosynthetic process"/>
    <property type="evidence" value="ECO:0007669"/>
    <property type="project" value="UniProtKB-UniRule"/>
</dbReference>
<dbReference type="CDD" id="cd00564">
    <property type="entry name" value="TMP_TenI"/>
    <property type="match status" value="1"/>
</dbReference>
<dbReference type="FunFam" id="3.20.20.70:FF:000096">
    <property type="entry name" value="Thiamine-phosphate synthase"/>
    <property type="match status" value="1"/>
</dbReference>
<dbReference type="Gene3D" id="3.20.20.70">
    <property type="entry name" value="Aldolase class I"/>
    <property type="match status" value="1"/>
</dbReference>
<dbReference type="HAMAP" id="MF_00097">
    <property type="entry name" value="TMP_synthase"/>
    <property type="match status" value="1"/>
</dbReference>
<dbReference type="InterPro" id="IPR013785">
    <property type="entry name" value="Aldolase_TIM"/>
</dbReference>
<dbReference type="InterPro" id="IPR036206">
    <property type="entry name" value="ThiamineP_synth_sf"/>
</dbReference>
<dbReference type="InterPro" id="IPR022998">
    <property type="entry name" value="ThiamineP_synth_TenI"/>
</dbReference>
<dbReference type="InterPro" id="IPR034291">
    <property type="entry name" value="TMP_synthase"/>
</dbReference>
<dbReference type="NCBIfam" id="TIGR00693">
    <property type="entry name" value="thiE"/>
    <property type="match status" value="1"/>
</dbReference>
<dbReference type="PANTHER" id="PTHR20857:SF23">
    <property type="entry name" value="THIAMINE BIOSYNTHETIC BIFUNCTIONAL ENZYME"/>
    <property type="match status" value="1"/>
</dbReference>
<dbReference type="PANTHER" id="PTHR20857">
    <property type="entry name" value="THIAMINE-PHOSPHATE PYROPHOSPHORYLASE"/>
    <property type="match status" value="1"/>
</dbReference>
<dbReference type="Pfam" id="PF02581">
    <property type="entry name" value="TMP-TENI"/>
    <property type="match status" value="1"/>
</dbReference>
<dbReference type="SUPFAM" id="SSF51391">
    <property type="entry name" value="Thiamin phosphate synthase"/>
    <property type="match status" value="1"/>
</dbReference>
<proteinExistence type="inferred from homology"/>
<name>THIE_CLOD6</name>
<keyword id="KW-0460">Magnesium</keyword>
<keyword id="KW-0479">Metal-binding</keyword>
<keyword id="KW-1185">Reference proteome</keyword>
<keyword id="KW-0784">Thiamine biosynthesis</keyword>
<keyword id="KW-0808">Transferase</keyword>
<feature type="chain" id="PRO_0000336386" description="Thiamine-phosphate synthase">
    <location>
        <begin position="1"/>
        <end position="210"/>
    </location>
</feature>
<feature type="binding site" evidence="1">
    <location>
        <begin position="43"/>
        <end position="47"/>
    </location>
    <ligand>
        <name>4-amino-2-methyl-5-(diphosphooxymethyl)pyrimidine</name>
        <dbReference type="ChEBI" id="CHEBI:57841"/>
    </ligand>
</feature>
<feature type="binding site" evidence="1">
    <location>
        <position position="75"/>
    </location>
    <ligand>
        <name>4-amino-2-methyl-5-(diphosphooxymethyl)pyrimidine</name>
        <dbReference type="ChEBI" id="CHEBI:57841"/>
    </ligand>
</feature>
<feature type="binding site" evidence="1">
    <location>
        <position position="76"/>
    </location>
    <ligand>
        <name>Mg(2+)</name>
        <dbReference type="ChEBI" id="CHEBI:18420"/>
    </ligand>
</feature>
<feature type="binding site" evidence="1">
    <location>
        <position position="95"/>
    </location>
    <ligand>
        <name>Mg(2+)</name>
        <dbReference type="ChEBI" id="CHEBI:18420"/>
    </ligand>
</feature>
<feature type="binding site" evidence="1">
    <location>
        <position position="114"/>
    </location>
    <ligand>
        <name>4-amino-2-methyl-5-(diphosphooxymethyl)pyrimidine</name>
        <dbReference type="ChEBI" id="CHEBI:57841"/>
    </ligand>
</feature>
<feature type="binding site" evidence="1">
    <location>
        <begin position="140"/>
        <end position="142"/>
    </location>
    <ligand>
        <name>2-[(2R,5Z)-2-carboxy-4-methylthiazol-5(2H)-ylidene]ethyl phosphate</name>
        <dbReference type="ChEBI" id="CHEBI:62899"/>
    </ligand>
</feature>
<feature type="binding site" evidence="1">
    <location>
        <position position="143"/>
    </location>
    <ligand>
        <name>4-amino-2-methyl-5-(diphosphooxymethyl)pyrimidine</name>
        <dbReference type="ChEBI" id="CHEBI:57841"/>
    </ligand>
</feature>
<feature type="binding site" evidence="1">
    <location>
        <position position="170"/>
    </location>
    <ligand>
        <name>2-[(2R,5Z)-2-carboxy-4-methylthiazol-5(2H)-ylidene]ethyl phosphate</name>
        <dbReference type="ChEBI" id="CHEBI:62899"/>
    </ligand>
</feature>
<feature type="binding site" evidence="1">
    <location>
        <begin position="190"/>
        <end position="191"/>
    </location>
    <ligand>
        <name>2-[(2R,5Z)-2-carboxy-4-methylthiazol-5(2H)-ylidene]ethyl phosphate</name>
        <dbReference type="ChEBI" id="CHEBI:62899"/>
    </ligand>
</feature>
<sequence length="210" mass="23414">MIDKESLKKCLKLYLVTDSEMLKGRDFYKCLEDAISSGITTVQLREKNASGREFLRKAMKLREITKRYGVKFIINDRVDIALICDADGVHVGQSDIDVREVRKLIGNNKILGVSARTLEEAICAKNDGADYLGVGSIFTTSTKLDAKSASFETVKEIKEKVDMPFVLIGGINLDNIDKLKCLESDGYAIISAILKAEDISKEVEKWTLKI</sequence>
<comment type="function">
    <text evidence="1">Condenses 4-methyl-5-(beta-hydroxyethyl)thiazole monophosphate (THZ-P) and 2-methyl-4-amino-5-hydroxymethyl pyrimidine pyrophosphate (HMP-PP) to form thiamine monophosphate (TMP).</text>
</comment>
<comment type="catalytic activity">
    <reaction evidence="1">
        <text>2-[(2R,5Z)-2-carboxy-4-methylthiazol-5(2H)-ylidene]ethyl phosphate + 4-amino-2-methyl-5-(diphosphooxymethyl)pyrimidine + 2 H(+) = thiamine phosphate + CO2 + diphosphate</text>
        <dbReference type="Rhea" id="RHEA:47844"/>
        <dbReference type="ChEBI" id="CHEBI:15378"/>
        <dbReference type="ChEBI" id="CHEBI:16526"/>
        <dbReference type="ChEBI" id="CHEBI:33019"/>
        <dbReference type="ChEBI" id="CHEBI:37575"/>
        <dbReference type="ChEBI" id="CHEBI:57841"/>
        <dbReference type="ChEBI" id="CHEBI:62899"/>
        <dbReference type="EC" id="2.5.1.3"/>
    </reaction>
</comment>
<comment type="catalytic activity">
    <reaction evidence="1">
        <text>2-(2-carboxy-4-methylthiazol-5-yl)ethyl phosphate + 4-amino-2-methyl-5-(diphosphooxymethyl)pyrimidine + 2 H(+) = thiamine phosphate + CO2 + diphosphate</text>
        <dbReference type="Rhea" id="RHEA:47848"/>
        <dbReference type="ChEBI" id="CHEBI:15378"/>
        <dbReference type="ChEBI" id="CHEBI:16526"/>
        <dbReference type="ChEBI" id="CHEBI:33019"/>
        <dbReference type="ChEBI" id="CHEBI:37575"/>
        <dbReference type="ChEBI" id="CHEBI:57841"/>
        <dbReference type="ChEBI" id="CHEBI:62890"/>
        <dbReference type="EC" id="2.5.1.3"/>
    </reaction>
</comment>
<comment type="catalytic activity">
    <reaction evidence="1">
        <text>4-methyl-5-(2-phosphooxyethyl)-thiazole + 4-amino-2-methyl-5-(diphosphooxymethyl)pyrimidine + H(+) = thiamine phosphate + diphosphate</text>
        <dbReference type="Rhea" id="RHEA:22328"/>
        <dbReference type="ChEBI" id="CHEBI:15378"/>
        <dbReference type="ChEBI" id="CHEBI:33019"/>
        <dbReference type="ChEBI" id="CHEBI:37575"/>
        <dbReference type="ChEBI" id="CHEBI:57841"/>
        <dbReference type="ChEBI" id="CHEBI:58296"/>
        <dbReference type="EC" id="2.5.1.3"/>
    </reaction>
</comment>
<comment type="cofactor">
    <cofactor evidence="1">
        <name>Mg(2+)</name>
        <dbReference type="ChEBI" id="CHEBI:18420"/>
    </cofactor>
    <text evidence="1">Binds 1 Mg(2+) ion per subunit.</text>
</comment>
<comment type="pathway">
    <text evidence="1">Cofactor biosynthesis; thiamine diphosphate biosynthesis; thiamine phosphate from 4-amino-2-methyl-5-diphosphomethylpyrimidine and 4-methyl-5-(2-phosphoethyl)-thiazole: step 1/1.</text>
</comment>
<comment type="similarity">
    <text evidence="1">Belongs to the thiamine-phosphate synthase family.</text>
</comment>